<feature type="chain" id="PRO_1000134860" description="4-hydroxy-tetrahydrodipicolinate synthase">
    <location>
        <begin position="1"/>
        <end position="294"/>
    </location>
</feature>
<feature type="active site" description="Proton donor/acceptor" evidence="1">
    <location>
        <position position="133"/>
    </location>
</feature>
<feature type="active site" description="Schiff-base intermediate with substrate" evidence="1">
    <location>
        <position position="161"/>
    </location>
</feature>
<feature type="binding site" evidence="1">
    <location>
        <position position="45"/>
    </location>
    <ligand>
        <name>pyruvate</name>
        <dbReference type="ChEBI" id="CHEBI:15361"/>
    </ligand>
</feature>
<feature type="binding site" evidence="1">
    <location>
        <position position="203"/>
    </location>
    <ligand>
        <name>pyruvate</name>
        <dbReference type="ChEBI" id="CHEBI:15361"/>
    </ligand>
</feature>
<feature type="site" description="Part of a proton relay during catalysis" evidence="1">
    <location>
        <position position="44"/>
    </location>
</feature>
<feature type="site" description="Part of a proton relay during catalysis" evidence="1">
    <location>
        <position position="107"/>
    </location>
</feature>
<evidence type="ECO:0000255" key="1">
    <source>
        <dbReference type="HAMAP-Rule" id="MF_00418"/>
    </source>
</evidence>
<evidence type="ECO:0000305" key="2"/>
<keyword id="KW-0028">Amino-acid biosynthesis</keyword>
<keyword id="KW-0963">Cytoplasm</keyword>
<keyword id="KW-0220">Diaminopimelate biosynthesis</keyword>
<keyword id="KW-0456">Lyase</keyword>
<keyword id="KW-0457">Lysine biosynthesis</keyword>
<keyword id="KW-0704">Schiff base</keyword>
<name>DAPA_BUCA5</name>
<comment type="function">
    <text evidence="1">Catalyzes the condensation of (S)-aspartate-beta-semialdehyde [(S)-ASA] and pyruvate to 4-hydroxy-tetrahydrodipicolinate (HTPA).</text>
</comment>
<comment type="catalytic activity">
    <reaction evidence="1">
        <text>L-aspartate 4-semialdehyde + pyruvate = (2S,4S)-4-hydroxy-2,3,4,5-tetrahydrodipicolinate + H2O + H(+)</text>
        <dbReference type="Rhea" id="RHEA:34171"/>
        <dbReference type="ChEBI" id="CHEBI:15361"/>
        <dbReference type="ChEBI" id="CHEBI:15377"/>
        <dbReference type="ChEBI" id="CHEBI:15378"/>
        <dbReference type="ChEBI" id="CHEBI:67139"/>
        <dbReference type="ChEBI" id="CHEBI:537519"/>
        <dbReference type="EC" id="4.3.3.7"/>
    </reaction>
</comment>
<comment type="pathway">
    <text evidence="1">Amino-acid biosynthesis; L-lysine biosynthesis via DAP pathway; (S)-tetrahydrodipicolinate from L-aspartate: step 3/4.</text>
</comment>
<comment type="subunit">
    <text evidence="1">Homotetramer; dimer of dimers.</text>
</comment>
<comment type="subcellular location">
    <subcellularLocation>
        <location evidence="1">Cytoplasm</location>
    </subcellularLocation>
</comment>
<comment type="similarity">
    <text evidence="1">Belongs to the DapA family.</text>
</comment>
<comment type="caution">
    <text evidence="2">Was originally thought to be a dihydrodipicolinate synthase (DHDPS), catalyzing the condensation of (S)-aspartate-beta-semialdehyde [(S)-ASA] and pyruvate to dihydrodipicolinate (DHDP). However, it was shown in E.coli that the product of the enzymatic reaction is not dihydrodipicolinate but in fact (4S)-4-hydroxy-2,3,4,5-tetrahydro-(2S)-dipicolinic acid (HTPA), and that the consecutive dehydration reaction leading to DHDP is not spontaneous but catalyzed by DapB.</text>
</comment>
<gene>
    <name evidence="1" type="primary">dapA</name>
    <name type="ordered locus">BUAP5A_094</name>
</gene>
<reference key="1">
    <citation type="journal article" date="2009" name="Science">
        <title>The dynamics and time scale of ongoing genomic erosion in symbiotic bacteria.</title>
        <authorList>
            <person name="Moran N.A."/>
            <person name="McLaughlin H.J."/>
            <person name="Sorek R."/>
        </authorList>
    </citation>
    <scope>NUCLEOTIDE SEQUENCE [LARGE SCALE GENOMIC DNA]</scope>
    <source>
        <strain>5A</strain>
    </source>
</reference>
<protein>
    <recommendedName>
        <fullName evidence="1">4-hydroxy-tetrahydrodipicolinate synthase</fullName>
        <shortName evidence="1">HTPA synthase</shortName>
        <ecNumber evidence="1">4.3.3.7</ecNumber>
    </recommendedName>
</protein>
<accession>B8D8P8</accession>
<proteinExistence type="inferred from homology"/>
<organism>
    <name type="scientific">Buchnera aphidicola subsp. Acyrthosiphon pisum (strain 5A)</name>
    <dbReference type="NCBI Taxonomy" id="563178"/>
    <lineage>
        <taxon>Bacteria</taxon>
        <taxon>Pseudomonadati</taxon>
        <taxon>Pseudomonadota</taxon>
        <taxon>Gammaproteobacteria</taxon>
        <taxon>Enterobacterales</taxon>
        <taxon>Erwiniaceae</taxon>
        <taxon>Buchnera</taxon>
    </lineage>
</organism>
<dbReference type="EC" id="4.3.3.7" evidence="1"/>
<dbReference type="EMBL" id="CP001161">
    <property type="protein sequence ID" value="ACL30470.1"/>
    <property type="molecule type" value="Genomic_DNA"/>
</dbReference>
<dbReference type="RefSeq" id="WP_009874050.1">
    <property type="nucleotide sequence ID" value="NC_011833.1"/>
</dbReference>
<dbReference type="SMR" id="B8D8P8"/>
<dbReference type="KEGG" id="bap:BUAP5A_094"/>
<dbReference type="HOGENOM" id="CLU_049343_7_1_6"/>
<dbReference type="OrthoDB" id="9782828at2"/>
<dbReference type="UniPathway" id="UPA00034">
    <property type="reaction ID" value="UER00017"/>
</dbReference>
<dbReference type="Proteomes" id="UP000006904">
    <property type="component" value="Chromosome"/>
</dbReference>
<dbReference type="GO" id="GO:0005829">
    <property type="term" value="C:cytosol"/>
    <property type="evidence" value="ECO:0007669"/>
    <property type="project" value="TreeGrafter"/>
</dbReference>
<dbReference type="GO" id="GO:0008840">
    <property type="term" value="F:4-hydroxy-tetrahydrodipicolinate synthase activity"/>
    <property type="evidence" value="ECO:0007669"/>
    <property type="project" value="UniProtKB-UniRule"/>
</dbReference>
<dbReference type="GO" id="GO:0019877">
    <property type="term" value="P:diaminopimelate biosynthetic process"/>
    <property type="evidence" value="ECO:0007669"/>
    <property type="project" value="UniProtKB-UniRule"/>
</dbReference>
<dbReference type="GO" id="GO:0009089">
    <property type="term" value="P:lysine biosynthetic process via diaminopimelate"/>
    <property type="evidence" value="ECO:0007669"/>
    <property type="project" value="UniProtKB-UniRule"/>
</dbReference>
<dbReference type="CDD" id="cd00950">
    <property type="entry name" value="DHDPS"/>
    <property type="match status" value="1"/>
</dbReference>
<dbReference type="FunFam" id="3.20.20.70:FF:000046">
    <property type="entry name" value="4-hydroxy-tetrahydrodipicolinate synthase"/>
    <property type="match status" value="1"/>
</dbReference>
<dbReference type="Gene3D" id="3.20.20.70">
    <property type="entry name" value="Aldolase class I"/>
    <property type="match status" value="1"/>
</dbReference>
<dbReference type="HAMAP" id="MF_00418">
    <property type="entry name" value="DapA"/>
    <property type="match status" value="1"/>
</dbReference>
<dbReference type="InterPro" id="IPR013785">
    <property type="entry name" value="Aldolase_TIM"/>
</dbReference>
<dbReference type="InterPro" id="IPR005263">
    <property type="entry name" value="DapA"/>
</dbReference>
<dbReference type="InterPro" id="IPR002220">
    <property type="entry name" value="DapA-like"/>
</dbReference>
<dbReference type="InterPro" id="IPR020625">
    <property type="entry name" value="Schiff_base-form_aldolases_AS"/>
</dbReference>
<dbReference type="InterPro" id="IPR020624">
    <property type="entry name" value="Schiff_base-form_aldolases_CS"/>
</dbReference>
<dbReference type="NCBIfam" id="TIGR00674">
    <property type="entry name" value="dapA"/>
    <property type="match status" value="1"/>
</dbReference>
<dbReference type="PANTHER" id="PTHR12128:SF66">
    <property type="entry name" value="4-HYDROXY-2-OXOGLUTARATE ALDOLASE, MITOCHONDRIAL"/>
    <property type="match status" value="1"/>
</dbReference>
<dbReference type="PANTHER" id="PTHR12128">
    <property type="entry name" value="DIHYDRODIPICOLINATE SYNTHASE"/>
    <property type="match status" value="1"/>
</dbReference>
<dbReference type="Pfam" id="PF00701">
    <property type="entry name" value="DHDPS"/>
    <property type="match status" value="1"/>
</dbReference>
<dbReference type="PIRSF" id="PIRSF001365">
    <property type="entry name" value="DHDPS"/>
    <property type="match status" value="1"/>
</dbReference>
<dbReference type="PRINTS" id="PR00146">
    <property type="entry name" value="DHPICSNTHASE"/>
</dbReference>
<dbReference type="SMART" id="SM01130">
    <property type="entry name" value="DHDPS"/>
    <property type="match status" value="1"/>
</dbReference>
<dbReference type="SUPFAM" id="SSF51569">
    <property type="entry name" value="Aldolase"/>
    <property type="match status" value="1"/>
</dbReference>
<dbReference type="PROSITE" id="PS00665">
    <property type="entry name" value="DHDPS_1"/>
    <property type="match status" value="1"/>
</dbReference>
<dbReference type="PROSITE" id="PS00666">
    <property type="entry name" value="DHDPS_2"/>
    <property type="match status" value="1"/>
</dbReference>
<sequence>MFKGSIVALITPMDEKGQICRISLEKLINYHIASKTEAIVSIGTTGESATLSQEEHINIVMLTLELADGRIPVIAGTGANATTEAISLTKRFEKSGVAGCLSVTPYYNRPTQEGLYQHFKAISENTELPQILYNVPSRTGCDLLPETVAKLSHFNNIIGIKEATGDLSRIHKIKELVKTNFLLISGDDATALDFMQLGGQGVISVTANIAAKEMMEICSYALKGDFINARSINKRLMLLHEALFIEPNPIPVKWLAKKIGLIKSDTLRLPMTPVLDSTRFQLEKAIQYANLKIS</sequence>